<feature type="chain" id="PRO_0000165827" description="Cytosol aminopeptidase">
    <location>
        <begin position="1"/>
        <end position="519"/>
    </location>
</feature>
<feature type="active site" evidence="1">
    <location>
        <position position="294"/>
    </location>
</feature>
<feature type="active site" evidence="1">
    <location>
        <position position="368"/>
    </location>
</feature>
<feature type="binding site" evidence="1">
    <location>
        <position position="202"/>
    </location>
    <ligand>
        <name>Zn(2+)</name>
        <dbReference type="ChEBI" id="CHEBI:29105"/>
        <label>3</label>
        <note>structural</note>
    </ligand>
</feature>
<feature type="binding site" evidence="1">
    <location>
        <position position="203"/>
    </location>
    <ligand>
        <name>Zn(2+)</name>
        <dbReference type="ChEBI" id="CHEBI:29105"/>
        <label>3</label>
        <note>structural</note>
    </ligand>
</feature>
<feature type="binding site" evidence="1">
    <location>
        <position position="205"/>
    </location>
    <ligand>
        <name>Zn(2+)</name>
        <dbReference type="ChEBI" id="CHEBI:29105"/>
        <label>3</label>
        <note>structural</note>
    </ligand>
</feature>
<feature type="binding site" evidence="1">
    <location>
        <position position="282"/>
    </location>
    <ligand>
        <name>substrate</name>
    </ligand>
</feature>
<feature type="binding site" evidence="1">
    <location>
        <position position="282"/>
    </location>
    <ligand>
        <name>Zn(2+)</name>
        <dbReference type="ChEBI" id="CHEBI:29105"/>
        <label>2</label>
        <note>catalytic</note>
    </ligand>
</feature>
<feature type="binding site" evidence="1">
    <location>
        <position position="287"/>
    </location>
    <ligand>
        <name>Mg(2+)</name>
        <dbReference type="ChEBI" id="CHEBI:18420"/>
        <note>catalytic</note>
    </ligand>
</feature>
<feature type="binding site" evidence="1">
    <location>
        <position position="287"/>
    </location>
    <ligand>
        <name>substrate</name>
    </ligand>
</feature>
<feature type="binding site" evidence="1">
    <location>
        <position position="287"/>
    </location>
    <ligand>
        <name>Zn(2+)</name>
        <dbReference type="ChEBI" id="CHEBI:29105"/>
        <label>1</label>
        <note>catalytic</note>
    </ligand>
</feature>
<feature type="binding site" evidence="1">
    <location>
        <position position="287"/>
    </location>
    <ligand>
        <name>Zn(2+)</name>
        <dbReference type="ChEBI" id="CHEBI:29105"/>
        <label>2</label>
        <note>catalytic</note>
    </ligand>
</feature>
<feature type="binding site" evidence="1">
    <location>
        <position position="292"/>
    </location>
    <ligand>
        <name>substrate</name>
    </ligand>
</feature>
<feature type="binding site" evidence="1">
    <location>
        <position position="294"/>
    </location>
    <ligand>
        <name>substrate</name>
    </ligand>
</feature>
<feature type="binding site" evidence="1">
    <location>
        <position position="303"/>
    </location>
    <ligand>
        <name>Zn(2+)</name>
        <dbReference type="ChEBI" id="CHEBI:29105"/>
        <label>3</label>
        <note>structural</note>
    </ligand>
</feature>
<feature type="binding site" evidence="1">
    <location>
        <position position="305"/>
    </location>
    <ligand>
        <name>substrate</name>
    </ligand>
</feature>
<feature type="binding site" evidence="1">
    <location>
        <position position="305"/>
    </location>
    <ligand>
        <name>Zn(2+)</name>
        <dbReference type="ChEBI" id="CHEBI:29105"/>
        <label>2</label>
        <note>catalytic</note>
    </ligand>
</feature>
<feature type="binding site" evidence="1">
    <location>
        <position position="364"/>
    </location>
    <ligand>
        <name>Mg(2+)</name>
        <dbReference type="ChEBI" id="CHEBI:18420"/>
        <note>catalytic</note>
    </ligand>
</feature>
<feature type="binding site" evidence="1">
    <location>
        <position position="364"/>
    </location>
    <ligand>
        <name>substrate</name>
    </ligand>
</feature>
<feature type="binding site" evidence="1">
    <location>
        <position position="364"/>
    </location>
    <ligand>
        <name>Zn(2+)</name>
        <dbReference type="ChEBI" id="CHEBI:29105"/>
        <label>1</label>
        <note>catalytic</note>
    </ligand>
</feature>
<feature type="binding site" evidence="1">
    <location>
        <position position="366"/>
    </location>
    <ligand>
        <name>Mg(2+)</name>
        <dbReference type="ChEBI" id="CHEBI:18420"/>
        <note>catalytic</note>
    </ligand>
</feature>
<feature type="binding site" evidence="1">
    <location>
        <position position="366"/>
    </location>
    <ligand>
        <name>Zn(2+)</name>
        <dbReference type="ChEBI" id="CHEBI:29105"/>
        <label>1</label>
        <note>catalytic</note>
    </ligand>
</feature>
<feature type="binding site" evidence="1">
    <location>
        <position position="366"/>
    </location>
    <ligand>
        <name>Zn(2+)</name>
        <dbReference type="ChEBI" id="CHEBI:29105"/>
        <label>2</label>
        <note>catalytic</note>
    </ligand>
</feature>
<feature type="modified residue" description="Phosphoserine" evidence="3">
    <location>
        <position position="42"/>
    </location>
</feature>
<feature type="modified residue" description="N6-succinyllysine" evidence="4">
    <location>
        <position position="45"/>
    </location>
</feature>
<feature type="modified residue" description="Phosphoserine" evidence="3">
    <location>
        <position position="54"/>
    </location>
</feature>
<feature type="modified residue" description="N6-succinyllysine" evidence="4">
    <location>
        <position position="61"/>
    </location>
</feature>
<feature type="modified residue" description="N6-succinyllysine" evidence="4">
    <location>
        <position position="103"/>
    </location>
</feature>
<feature type="modified residue" description="Phosphoserine" evidence="4">
    <location>
        <position position="180"/>
    </location>
</feature>
<feature type="modified residue" description="Phosphoserine" evidence="2">
    <location>
        <position position="194"/>
    </location>
</feature>
<feature type="modified residue" description="N6-acetyllysine; alternate" evidence="4">
    <location>
        <position position="221"/>
    </location>
</feature>
<feature type="modified residue" description="N6-succinyllysine; alternate" evidence="4">
    <location>
        <position position="221"/>
    </location>
</feature>
<feature type="modified residue" description="Phosphoserine" evidence="4">
    <location>
        <position position="238"/>
    </location>
</feature>
<feature type="modified residue" description="N6-acetyllysine; alternate" evidence="4">
    <location>
        <position position="455"/>
    </location>
</feature>
<feature type="modified residue" description="N6-succinyllysine; alternate" evidence="4">
    <location>
        <position position="455"/>
    </location>
</feature>
<feature type="modified residue" description="N6-succinyllysine" evidence="4">
    <location>
        <position position="476"/>
    </location>
</feature>
<feature type="modified residue" description="N6-acetyllysine; alternate" evidence="4">
    <location>
        <position position="489"/>
    </location>
</feature>
<feature type="modified residue" description="N6-succinyllysine; alternate" evidence="4">
    <location>
        <position position="489"/>
    </location>
</feature>
<feature type="sequence conflict" description="In Ref. 2; AA sequence." evidence="5" ref="2">
    <original>L</original>
    <variation>W</variation>
    <location>
        <position position="62"/>
    </location>
</feature>
<evidence type="ECO:0000250" key="1">
    <source>
        <dbReference type="UniProtKB" id="P00727"/>
    </source>
</evidence>
<evidence type="ECO:0000250" key="2">
    <source>
        <dbReference type="UniProtKB" id="P28838"/>
    </source>
</evidence>
<evidence type="ECO:0000250" key="3">
    <source>
        <dbReference type="UniProtKB" id="Q68FS4"/>
    </source>
</evidence>
<evidence type="ECO:0000250" key="4">
    <source>
        <dbReference type="UniProtKB" id="Q9CPY7"/>
    </source>
</evidence>
<evidence type="ECO:0000305" key="5"/>
<evidence type="ECO:0000305" key="6">
    <source>
    </source>
</evidence>
<name>AMPL_PIG</name>
<accession>P28839</accession>
<accession>I3LD43</accession>
<sequence>MFLLPLPAAARVAVRQLSVRRFWGPGPDAANMTKGLVLGIYSKEKEDDAPQFTSAGENFDKLVSGKLREILNISGPPLKAGKTRTFYGLHEDFSSVVVVGLGKKGAGVDDQENWHEGKENIRAAVAAGCRQIQDLEIPSVEVDPCGDAQAAAEGAVLGLYEYDELKQKKKVVVSAKLHGSGDQEAWQRGVLFASGQNLARHLMETPANEMTPTRFAEVIEKNLKSASSKTDVHIRPKSWIEEQEMGSFLSVAKGSEEPPVFLEIHYKGSPDASDPPLVFVGKGITFDSGGISIKASANMDLMRADMGGAATICSTIVSAAKLDLPINLVGLAPLCENMPSGKANKPGDVVRAKNGKTIQVDNTDAEGRLILADALCYAHTFNPKVIINAATLTGAMDIALGSGATGVFTNSSWLWNKLFEASIETGDRVWRMPLFEHYTKQIVDCQLADVNNIGKYRSAGACTAAAFLKEFVTHPKWAHLDIAGVMTNKDEVPYLRKGMAGRPTRTLIEFLLRFSQDSA</sequence>
<proteinExistence type="evidence at protein level"/>
<dbReference type="EC" id="3.4.11.1" evidence="1"/>
<dbReference type="EC" id="3.4.13.23" evidence="1"/>
<dbReference type="EC" id="3.4.11.5" evidence="6"/>
<dbReference type="EMBL" id="AEMK02000064">
    <property type="status" value="NOT_ANNOTATED_CDS"/>
    <property type="molecule type" value="Genomic_DNA"/>
</dbReference>
<dbReference type="PIR" id="PT0430">
    <property type="entry name" value="PT0430"/>
</dbReference>
<dbReference type="RefSeq" id="XP_003356918.4">
    <property type="nucleotide sequence ID" value="XM_003356870.5"/>
</dbReference>
<dbReference type="RefSeq" id="XP_005666604.2">
    <property type="nucleotide sequence ID" value="XM_005666547.2"/>
</dbReference>
<dbReference type="SMR" id="P28839"/>
<dbReference type="FunCoup" id="P28839">
    <property type="interactions" value="716"/>
</dbReference>
<dbReference type="IntAct" id="P28839">
    <property type="interactions" value="1"/>
</dbReference>
<dbReference type="MINT" id="P28839"/>
<dbReference type="STRING" id="9823.ENSSSCP00000061377"/>
<dbReference type="BindingDB" id="P28839"/>
<dbReference type="ChEMBL" id="CHEMBL5624"/>
<dbReference type="DrugCentral" id="P28839"/>
<dbReference type="MEROPS" id="M17.001"/>
<dbReference type="PaxDb" id="9823-ENSSSCP00000021972"/>
<dbReference type="PeptideAtlas" id="P28839"/>
<dbReference type="Ensembl" id="ENSSSCT00000027356.3">
    <property type="protein sequence ID" value="ENSSSCP00000021972.2"/>
    <property type="gene ID" value="ENSSSCG00000023604.4"/>
</dbReference>
<dbReference type="Ensembl" id="ENSSSCT00025106731.1">
    <property type="protein sequence ID" value="ENSSSCP00025047982.1"/>
    <property type="gene ID" value="ENSSSCG00025076934.1"/>
</dbReference>
<dbReference type="Ensembl" id="ENSSSCT00035091598.1">
    <property type="protein sequence ID" value="ENSSSCP00035038416.1"/>
    <property type="gene ID" value="ENSSSCG00035067851.1"/>
</dbReference>
<dbReference type="Ensembl" id="ENSSSCT00040035908.1">
    <property type="protein sequence ID" value="ENSSSCP00040014877.1"/>
    <property type="gene ID" value="ENSSSCG00040026831.1"/>
</dbReference>
<dbReference type="Ensembl" id="ENSSSCT00055060655.1">
    <property type="protein sequence ID" value="ENSSSCP00055048599.1"/>
    <property type="gene ID" value="ENSSSCG00055030467.1"/>
</dbReference>
<dbReference type="Ensembl" id="ENSSSCT00060016457.1">
    <property type="protein sequence ID" value="ENSSSCP00060006509.1"/>
    <property type="gene ID" value="ENSSSCG00060012541.1"/>
</dbReference>
<dbReference type="Ensembl" id="ENSSSCT00065043816.1">
    <property type="protein sequence ID" value="ENSSSCP00065018655.1"/>
    <property type="gene ID" value="ENSSSCG00065032265.1"/>
</dbReference>
<dbReference type="Ensembl" id="ENSSSCT00090013333">
    <property type="protein sequence ID" value="ENSSSCP00090008525"/>
    <property type="gene ID" value="ENSSSCG00090007475"/>
</dbReference>
<dbReference type="Ensembl" id="ENSSSCT00105043800">
    <property type="protein sequence ID" value="ENSSSCP00105030530"/>
    <property type="gene ID" value="ENSSSCG00105022967"/>
</dbReference>
<dbReference type="Ensembl" id="ENSSSCT00115004209">
    <property type="protein sequence ID" value="ENSSSCP00115003883"/>
    <property type="gene ID" value="ENSSSCG00115002510"/>
</dbReference>
<dbReference type="Ensembl" id="ENSSSCT00130012573">
    <property type="protein sequence ID" value="ENSSSCP00130008233"/>
    <property type="gene ID" value="ENSSSCG00130006934"/>
</dbReference>
<dbReference type="GeneID" id="100739583"/>
<dbReference type="VGNC" id="VGNC:89635">
    <property type="gene designation" value="LAP3"/>
</dbReference>
<dbReference type="eggNOG" id="KOG2597">
    <property type="taxonomic scope" value="Eukaryota"/>
</dbReference>
<dbReference type="GeneTree" id="ENSGT00530000063255"/>
<dbReference type="HOGENOM" id="CLU_013734_1_1_1"/>
<dbReference type="InParanoid" id="P28839"/>
<dbReference type="OMA" id="WPMPLPE"/>
<dbReference type="SABIO-RK" id="P28839"/>
<dbReference type="Proteomes" id="UP000008227">
    <property type="component" value="Chromosome 8"/>
</dbReference>
<dbReference type="Proteomes" id="UP000314985">
    <property type="component" value="Unplaced"/>
</dbReference>
<dbReference type="Proteomes" id="UP000694570">
    <property type="component" value="Unplaced"/>
</dbReference>
<dbReference type="Proteomes" id="UP000694571">
    <property type="component" value="Unplaced"/>
</dbReference>
<dbReference type="Proteomes" id="UP000694720">
    <property type="component" value="Unplaced"/>
</dbReference>
<dbReference type="Proteomes" id="UP000694722">
    <property type="component" value="Unplaced"/>
</dbReference>
<dbReference type="Proteomes" id="UP000694723">
    <property type="component" value="Unplaced"/>
</dbReference>
<dbReference type="Proteomes" id="UP000694724">
    <property type="component" value="Unplaced"/>
</dbReference>
<dbReference type="Proteomes" id="UP000694725">
    <property type="component" value="Unplaced"/>
</dbReference>
<dbReference type="Proteomes" id="UP000694726">
    <property type="component" value="Unplaced"/>
</dbReference>
<dbReference type="Proteomes" id="UP000694727">
    <property type="component" value="Unplaced"/>
</dbReference>
<dbReference type="Proteomes" id="UP000694728">
    <property type="component" value="Unplaced"/>
</dbReference>
<dbReference type="Bgee" id="ENSSSCG00000023604">
    <property type="expression patterns" value="Expressed in adult mammalian kidney and 45 other cell types or tissues"/>
</dbReference>
<dbReference type="ExpressionAtlas" id="P28839">
    <property type="expression patterns" value="baseline and differential"/>
</dbReference>
<dbReference type="GO" id="GO:0005737">
    <property type="term" value="C:cytoplasm"/>
    <property type="evidence" value="ECO:0000318"/>
    <property type="project" value="GO_Central"/>
</dbReference>
<dbReference type="GO" id="GO:0004180">
    <property type="term" value="F:carboxypeptidase activity"/>
    <property type="evidence" value="ECO:0007669"/>
    <property type="project" value="RHEA"/>
</dbReference>
<dbReference type="GO" id="GO:0030145">
    <property type="term" value="F:manganese ion binding"/>
    <property type="evidence" value="ECO:0007669"/>
    <property type="project" value="InterPro"/>
</dbReference>
<dbReference type="GO" id="GO:0070006">
    <property type="term" value="F:metalloaminopeptidase activity"/>
    <property type="evidence" value="ECO:0007669"/>
    <property type="project" value="InterPro"/>
</dbReference>
<dbReference type="GO" id="GO:0008233">
    <property type="term" value="F:peptidase activity"/>
    <property type="evidence" value="ECO:0000318"/>
    <property type="project" value="GO_Central"/>
</dbReference>
<dbReference type="GO" id="GO:0006508">
    <property type="term" value="P:proteolysis"/>
    <property type="evidence" value="ECO:0000318"/>
    <property type="project" value="GO_Central"/>
</dbReference>
<dbReference type="CDD" id="cd00433">
    <property type="entry name" value="Peptidase_M17"/>
    <property type="match status" value="1"/>
</dbReference>
<dbReference type="FunFam" id="3.40.220.10:FF:000005">
    <property type="entry name" value="cytosol aminopeptidase"/>
    <property type="match status" value="1"/>
</dbReference>
<dbReference type="FunFam" id="3.40.630.10:FF:000031">
    <property type="entry name" value="cytosol aminopeptidase"/>
    <property type="match status" value="1"/>
</dbReference>
<dbReference type="Gene3D" id="3.40.220.10">
    <property type="entry name" value="Leucine Aminopeptidase, subunit E, domain 1"/>
    <property type="match status" value="1"/>
</dbReference>
<dbReference type="Gene3D" id="3.40.630.10">
    <property type="entry name" value="Zn peptidases"/>
    <property type="match status" value="1"/>
</dbReference>
<dbReference type="HAMAP" id="MF_00181">
    <property type="entry name" value="Cytosol_peptidase_M17"/>
    <property type="match status" value="1"/>
</dbReference>
<dbReference type="InterPro" id="IPR011356">
    <property type="entry name" value="Leucine_aapep/pepB"/>
</dbReference>
<dbReference type="InterPro" id="IPR043472">
    <property type="entry name" value="Macro_dom-like"/>
</dbReference>
<dbReference type="InterPro" id="IPR000819">
    <property type="entry name" value="Peptidase_M17_C"/>
</dbReference>
<dbReference type="InterPro" id="IPR023042">
    <property type="entry name" value="Peptidase_M17_leu_NH2_pept"/>
</dbReference>
<dbReference type="InterPro" id="IPR008283">
    <property type="entry name" value="Peptidase_M17_N"/>
</dbReference>
<dbReference type="PANTHER" id="PTHR11963:SF23">
    <property type="entry name" value="CYTOSOL AMINOPEPTIDASE"/>
    <property type="match status" value="1"/>
</dbReference>
<dbReference type="PANTHER" id="PTHR11963">
    <property type="entry name" value="LEUCINE AMINOPEPTIDASE-RELATED"/>
    <property type="match status" value="1"/>
</dbReference>
<dbReference type="Pfam" id="PF00883">
    <property type="entry name" value="Peptidase_M17"/>
    <property type="match status" value="1"/>
</dbReference>
<dbReference type="Pfam" id="PF02789">
    <property type="entry name" value="Peptidase_M17_N"/>
    <property type="match status" value="1"/>
</dbReference>
<dbReference type="PRINTS" id="PR00481">
    <property type="entry name" value="LAMNOPPTDASE"/>
</dbReference>
<dbReference type="SUPFAM" id="SSF52949">
    <property type="entry name" value="Macro domain-like"/>
    <property type="match status" value="1"/>
</dbReference>
<dbReference type="SUPFAM" id="SSF53187">
    <property type="entry name" value="Zn-dependent exopeptidases"/>
    <property type="match status" value="1"/>
</dbReference>
<dbReference type="PROSITE" id="PS00631">
    <property type="entry name" value="CYTOSOL_AP"/>
    <property type="match status" value="1"/>
</dbReference>
<organism>
    <name type="scientific">Sus scrofa</name>
    <name type="common">Pig</name>
    <dbReference type="NCBI Taxonomy" id="9823"/>
    <lineage>
        <taxon>Eukaryota</taxon>
        <taxon>Metazoa</taxon>
        <taxon>Chordata</taxon>
        <taxon>Craniata</taxon>
        <taxon>Vertebrata</taxon>
        <taxon>Euteleostomi</taxon>
        <taxon>Mammalia</taxon>
        <taxon>Eutheria</taxon>
        <taxon>Laurasiatheria</taxon>
        <taxon>Artiodactyla</taxon>
        <taxon>Suina</taxon>
        <taxon>Suidae</taxon>
        <taxon>Sus</taxon>
    </lineage>
</organism>
<keyword id="KW-0007">Acetylation</keyword>
<keyword id="KW-0031">Aminopeptidase</keyword>
<keyword id="KW-0963">Cytoplasm</keyword>
<keyword id="KW-0903">Direct protein sequencing</keyword>
<keyword id="KW-0378">Hydrolase</keyword>
<keyword id="KW-0460">Magnesium</keyword>
<keyword id="KW-0464">Manganese</keyword>
<keyword id="KW-0479">Metal-binding</keyword>
<keyword id="KW-0597">Phosphoprotein</keyword>
<keyword id="KW-0645">Protease</keyword>
<keyword id="KW-1185">Reference proteome</keyword>
<keyword id="KW-0862">Zinc</keyword>
<gene>
    <name evidence="2" type="primary">LAP3</name>
</gene>
<reference key="1">
    <citation type="submission" date="2009-11" db="EMBL/GenBank/DDBJ databases">
        <authorList>
            <consortium name="Porcine genome sequencing project"/>
        </authorList>
    </citation>
    <scope>NUCLEOTIDE SEQUENCE [LARGE SCALE GENOMIC DNA]</scope>
    <source>
        <strain>Duroc</strain>
    </source>
</reference>
<reference key="2">
    <citation type="journal article" date="1991" name="Biochem. Biophys. Res. Commun.">
        <title>Structural and immunological evidence for the identity of prolyl aminopeptidase with leucyl aminopeptidase.</title>
        <authorList>
            <person name="Matsushima M."/>
            <person name="Takahashi T."/>
            <person name="Ichinose M."/>
            <person name="Miki K."/>
            <person name="Kurokawa K."/>
            <person name="Takahashi K."/>
        </authorList>
    </citation>
    <scope>PROTEIN SEQUENCE OF 33-68</scope>
    <scope>CATALYTIC ACTIVITY</scope>
    <source>
        <tissue>Intestine</tissue>
        <tissue>Kidney</tissue>
    </source>
</reference>
<comment type="function">
    <text evidence="1">Cytosolic metallopeptidase that catalyzes the removal of unsubstituted N-terminal hydrophobic amino acids from various peptides. The presence of Zn(2+) ions is essential for the peptidase activity, and the association with other cofactors can modulate the substrate spectificity of the enzyme. For instance, in the presence of Mn(2+), it displays a specific Cys-Gly hydrolyzing activity of Cys-Gly-S-conjugates. Involved in the metabolism of glutathione and in the degradation of glutathione S-conjugates, which may play a role in the control of the cell redox status.</text>
</comment>
<comment type="catalytic activity">
    <reaction evidence="6">
        <text>Release of an N-terminal amino acid, Xaa-|-Yaa-, in which Xaa is preferably Leu, but may be other amino acids including Pro although not Arg or Lys, and Yaa may be Pro. Amino acid amides and methyl esters are also readily hydrolyzed, but rates on arylamides are exceedingly low.</text>
        <dbReference type="EC" id="3.4.11.1"/>
    </reaction>
</comment>
<comment type="catalytic activity">
    <reaction evidence="1">
        <text>an S-substituted L-cysteinylglycine + H2O = an S-substituted L-cysteine + glycine</text>
        <dbReference type="Rhea" id="RHEA:60444"/>
        <dbReference type="ChEBI" id="CHEBI:15377"/>
        <dbReference type="ChEBI" id="CHEBI:57305"/>
        <dbReference type="ChEBI" id="CHEBI:58717"/>
        <dbReference type="ChEBI" id="CHEBI:143103"/>
        <dbReference type="EC" id="3.4.13.23"/>
    </reaction>
    <physiologicalReaction direction="left-to-right" evidence="1">
        <dbReference type="Rhea" id="RHEA:60445"/>
    </physiologicalReaction>
</comment>
<comment type="catalytic activity">
    <reaction evidence="1">
        <text>L-cysteinylglycine + H2O = L-cysteine + glycine</text>
        <dbReference type="Rhea" id="RHEA:28783"/>
        <dbReference type="ChEBI" id="CHEBI:15377"/>
        <dbReference type="ChEBI" id="CHEBI:35235"/>
        <dbReference type="ChEBI" id="CHEBI:57305"/>
        <dbReference type="ChEBI" id="CHEBI:61694"/>
    </reaction>
    <physiologicalReaction direction="left-to-right" evidence="1">
        <dbReference type="Rhea" id="RHEA:28784"/>
    </physiologicalReaction>
</comment>
<comment type="catalytic activity">
    <reaction evidence="3">
        <text>S-benzyl-L-cysteinylglycine + H2O = S-benzyl-L-cysteine + glycine</text>
        <dbReference type="Rhea" id="RHEA:62568"/>
        <dbReference type="ChEBI" id="CHEBI:15377"/>
        <dbReference type="ChEBI" id="CHEBI:57305"/>
        <dbReference type="ChEBI" id="CHEBI:145802"/>
        <dbReference type="ChEBI" id="CHEBI:145803"/>
    </reaction>
    <physiologicalReaction direction="left-to-right" evidence="3">
        <dbReference type="Rhea" id="RHEA:62569"/>
    </physiologicalReaction>
</comment>
<comment type="catalytic activity">
    <reaction evidence="6">
        <text>Release of N-terminal proline from a peptide.</text>
        <dbReference type="EC" id="3.4.11.5"/>
    </reaction>
</comment>
<comment type="cofactor">
    <cofactor evidence="1">
        <name>Zn(2+)</name>
        <dbReference type="ChEBI" id="CHEBI:29105"/>
    </cofactor>
    <cofactor evidence="1">
        <name>Mn(2+)</name>
        <dbReference type="ChEBI" id="CHEBI:29035"/>
    </cofactor>
    <text evidence="1">Binds two metal ions per subunit. Two metal binding sites with different affinities are located in the enzyme active site and can be occupied in vitro by different metals: site 1 is occupied by Zn(2+), Mn(2+), Mg(2+) or Co(2+), while the tight binding site 2 can be occupied by only Zn(2+) or Co(2+). One Zn(2+) ion is tightly bound to site 2 and essential for enzyme activity in vivo, while site 1 can be occupied by different metals to give different enzymatic activities. Mn(2+) is required for Cys-Gly hydrolysis activity. A third metal binding site may serve a structural role, possibly stabilizing part of the interface between the N-terminal and the catalytic domain.</text>
</comment>
<comment type="subunit">
    <text evidence="1">Homohexamer.</text>
</comment>
<comment type="subcellular location">
    <subcellularLocation>
        <location evidence="3">Cytoplasm</location>
    </subcellularLocation>
</comment>
<comment type="similarity">
    <text evidence="5">Belongs to the peptidase M17 family.</text>
</comment>
<protein>
    <recommendedName>
        <fullName evidence="5">Cytosol aminopeptidase</fullName>
        <ecNumber evidence="1">3.4.11.1</ecNumber>
    </recommendedName>
    <alternativeName>
        <fullName evidence="1">Cysteinylglycine-S-conjugate dipeptidase</fullName>
        <ecNumber evidence="1">3.4.13.23</ecNumber>
    </alternativeName>
    <alternativeName>
        <fullName evidence="2">Leucine aminopeptidase 3</fullName>
        <shortName>LAP-3</shortName>
    </alternativeName>
    <alternativeName>
        <fullName evidence="1">Leucyl aminopeptidase</fullName>
    </alternativeName>
    <alternativeName>
        <fullName evidence="6">Proline aminopeptidase</fullName>
        <ecNumber evidence="6">3.4.11.5</ecNumber>
    </alternativeName>
    <alternativeName>
        <fullName evidence="2">Prolyl aminopeptidase</fullName>
    </alternativeName>
</protein>